<name>MBTL_MYCPA</name>
<evidence type="ECO:0000250" key="1"/>
<evidence type="ECO:0000255" key="2">
    <source>
        <dbReference type="PROSITE-ProRule" id="PRU00258"/>
    </source>
</evidence>
<comment type="function">
    <text evidence="1">Acyl carrier protein involved in the formation of acyl-S-ACP intermediates within the mycobactin biosynthesis process.</text>
</comment>
<comment type="pathway">
    <text>Siderophore biosynthesis; mycobactin biosynthesis.</text>
</comment>
<comment type="subcellular location">
    <subcellularLocation>
        <location evidence="1">Cytoplasm</location>
    </subcellularLocation>
</comment>
<comment type="PTM">
    <text evidence="1">4'-phosphopantetheine is transferred from CoA to a specific serine of apo-ACP, leading to the activated holo-ACP form.</text>
</comment>
<organism>
    <name type="scientific">Mycolicibacterium paratuberculosis (strain ATCC BAA-968 / K-10)</name>
    <name type="common">Mycobacterium paratuberculosis</name>
    <dbReference type="NCBI Taxonomy" id="262316"/>
    <lineage>
        <taxon>Bacteria</taxon>
        <taxon>Bacillati</taxon>
        <taxon>Actinomycetota</taxon>
        <taxon>Actinomycetes</taxon>
        <taxon>Mycobacteriales</taxon>
        <taxon>Mycobacteriaceae</taxon>
        <taxon>Mycobacterium</taxon>
        <taxon>Mycobacterium avium complex (MAC)</taxon>
    </lineage>
</organism>
<dbReference type="EMBL" id="AE016958">
    <property type="protein sequence ID" value="AAS03872.1"/>
    <property type="molecule type" value="Genomic_DNA"/>
</dbReference>
<dbReference type="RefSeq" id="WP_003877916.1">
    <property type="nucleotide sequence ID" value="NZ_CP106873.1"/>
</dbReference>
<dbReference type="SMR" id="Q73ZP6"/>
<dbReference type="STRING" id="262316.MAP_1555c"/>
<dbReference type="KEGG" id="mpa:MAP_1555c"/>
<dbReference type="PATRIC" id="fig|262316.17.peg.1647"/>
<dbReference type="eggNOG" id="COG0236">
    <property type="taxonomic scope" value="Bacteria"/>
</dbReference>
<dbReference type="HOGENOM" id="CLU_108696_3_1_11"/>
<dbReference type="UniPathway" id="UPA00011"/>
<dbReference type="Proteomes" id="UP000000580">
    <property type="component" value="Chromosome"/>
</dbReference>
<dbReference type="GO" id="GO:0005737">
    <property type="term" value="C:cytoplasm"/>
    <property type="evidence" value="ECO:0007669"/>
    <property type="project" value="UniProtKB-SubCell"/>
</dbReference>
<dbReference type="Gene3D" id="1.10.1200.10">
    <property type="entry name" value="ACP-like"/>
    <property type="match status" value="1"/>
</dbReference>
<dbReference type="InterPro" id="IPR036736">
    <property type="entry name" value="ACP-like_sf"/>
</dbReference>
<dbReference type="InterPro" id="IPR009081">
    <property type="entry name" value="PP-bd_ACP"/>
</dbReference>
<dbReference type="NCBIfam" id="NF004533">
    <property type="entry name" value="PRK05883.1"/>
    <property type="match status" value="1"/>
</dbReference>
<dbReference type="Pfam" id="PF00550">
    <property type="entry name" value="PP-binding"/>
    <property type="match status" value="1"/>
</dbReference>
<dbReference type="SUPFAM" id="SSF47336">
    <property type="entry name" value="ACP-like"/>
    <property type="match status" value="1"/>
</dbReference>
<dbReference type="PROSITE" id="PS50075">
    <property type="entry name" value="CARRIER"/>
    <property type="match status" value="1"/>
</dbReference>
<protein>
    <recommendedName>
        <fullName>Acyl carrier protein MbtL</fullName>
        <shortName>ACP</shortName>
    </recommendedName>
    <alternativeName>
        <fullName>Mycobactin synthase protein L</fullName>
    </alternativeName>
</protein>
<sequence length="89" mass="9475">MPAGSPENHVSAELLGILRDDLNVDVSRVTPDARLVDDVGLDSVAFAVGMVAIEERLGVTLTEEELLSCETVGDLQAAIAAEPRETRDE</sequence>
<gene>
    <name type="primary">mbtL</name>
    <name type="ordered locus">MAP_1555c</name>
</gene>
<reference key="1">
    <citation type="journal article" date="2005" name="Proc. Natl. Acad. Sci. U.S.A.">
        <title>The complete genome sequence of Mycobacterium avium subspecies paratuberculosis.</title>
        <authorList>
            <person name="Li L."/>
            <person name="Bannantine J.P."/>
            <person name="Zhang Q."/>
            <person name="Amonsin A."/>
            <person name="May B.J."/>
            <person name="Alt D."/>
            <person name="Banerji N."/>
            <person name="Kanjilal S."/>
            <person name="Kapur V."/>
        </authorList>
    </citation>
    <scope>NUCLEOTIDE SEQUENCE [LARGE SCALE GENOMIC DNA]</scope>
    <source>
        <strain>ATCC BAA-968 / K-10</strain>
    </source>
</reference>
<feature type="chain" id="PRO_0000262087" description="Acyl carrier protein MbtL">
    <location>
        <begin position="1"/>
        <end position="89"/>
    </location>
</feature>
<feature type="domain" description="Carrier" evidence="2">
    <location>
        <begin position="8"/>
        <end position="83"/>
    </location>
</feature>
<feature type="modified residue" description="O-(pantetheine 4'-phosphoryl)serine" evidence="2">
    <location>
        <position position="43"/>
    </location>
</feature>
<keyword id="KW-0963">Cytoplasm</keyword>
<keyword id="KW-0596">Phosphopantetheine</keyword>
<keyword id="KW-0597">Phosphoprotein</keyword>
<keyword id="KW-1185">Reference proteome</keyword>
<accession>Q73ZP6</accession>
<proteinExistence type="inferred from homology"/>